<proteinExistence type="evidence at transcript level"/>
<name>GACFF_DICDI</name>
<dbReference type="EMBL" id="AAFI02000013">
    <property type="protein sequence ID" value="EAL69823.1"/>
    <property type="molecule type" value="Genomic_DNA"/>
</dbReference>
<dbReference type="RefSeq" id="XP_643800.1">
    <property type="nucleotide sequence ID" value="XM_638708.1"/>
</dbReference>
<dbReference type="SMR" id="Q86I31"/>
<dbReference type="FunCoup" id="Q86I31">
    <property type="interactions" value="130"/>
</dbReference>
<dbReference type="STRING" id="44689.Q86I31"/>
<dbReference type="PaxDb" id="44689-DDB0233844"/>
<dbReference type="EnsemblProtists" id="EAL69823">
    <property type="protein sequence ID" value="EAL69823"/>
    <property type="gene ID" value="DDB_G0275085"/>
</dbReference>
<dbReference type="GeneID" id="8619845"/>
<dbReference type="KEGG" id="ddi:DDB_G0275085"/>
<dbReference type="dictyBase" id="DDB_G0275085">
    <property type="gene designation" value="gacFF"/>
</dbReference>
<dbReference type="VEuPathDB" id="AmoebaDB:DDB_G0275085"/>
<dbReference type="eggNOG" id="KOG0930">
    <property type="taxonomic scope" value="Eukaryota"/>
</dbReference>
<dbReference type="eggNOG" id="KOG4269">
    <property type="taxonomic scope" value="Eukaryota"/>
</dbReference>
<dbReference type="HOGENOM" id="CLU_325835_0_0_1"/>
<dbReference type="InParanoid" id="Q86I31"/>
<dbReference type="OMA" id="MPTLKCS"/>
<dbReference type="Reactome" id="R-DDI-9013148">
    <property type="pathway name" value="CDC42 GTPase cycle"/>
</dbReference>
<dbReference type="Reactome" id="R-DDI-9013149">
    <property type="pathway name" value="RAC1 GTPase cycle"/>
</dbReference>
<dbReference type="Reactome" id="R-DDI-9013423">
    <property type="pathway name" value="RAC3 GTPase cycle"/>
</dbReference>
<dbReference type="Reactome" id="R-DDI-9013424">
    <property type="pathway name" value="RHOV GTPase cycle"/>
</dbReference>
<dbReference type="PRO" id="PR:Q86I31"/>
<dbReference type="Proteomes" id="UP000002195">
    <property type="component" value="Chromosome 2"/>
</dbReference>
<dbReference type="GO" id="GO:0005737">
    <property type="term" value="C:cytoplasm"/>
    <property type="evidence" value="ECO:0000318"/>
    <property type="project" value="GO_Central"/>
</dbReference>
<dbReference type="GO" id="GO:0005886">
    <property type="term" value="C:plasma membrane"/>
    <property type="evidence" value="ECO:0000318"/>
    <property type="project" value="GO_Central"/>
</dbReference>
<dbReference type="GO" id="GO:0005096">
    <property type="term" value="F:GTPase activator activity"/>
    <property type="evidence" value="ECO:0000318"/>
    <property type="project" value="GO_Central"/>
</dbReference>
<dbReference type="GO" id="GO:0007264">
    <property type="term" value="P:small GTPase-mediated signal transduction"/>
    <property type="evidence" value="ECO:0000318"/>
    <property type="project" value="GO_Central"/>
</dbReference>
<dbReference type="CDD" id="cd22148">
    <property type="entry name" value="F-box_DdgacFF-like"/>
    <property type="match status" value="1"/>
</dbReference>
<dbReference type="CDD" id="cd00821">
    <property type="entry name" value="PH"/>
    <property type="match status" value="1"/>
</dbReference>
<dbReference type="CDD" id="cd00159">
    <property type="entry name" value="RhoGAP"/>
    <property type="match status" value="1"/>
</dbReference>
<dbReference type="FunFam" id="1.10.555.10:FF:000139">
    <property type="entry name" value="Probable inactive serine/threonine-protein kinase DDB_G0293184"/>
    <property type="match status" value="1"/>
</dbReference>
<dbReference type="FunFam" id="2.30.29.30:FF:000700">
    <property type="entry name" value="Probable serine/threonine-protein kinase DDB_G0272282"/>
    <property type="match status" value="1"/>
</dbReference>
<dbReference type="Gene3D" id="1.20.1280.50">
    <property type="match status" value="1"/>
</dbReference>
<dbReference type="Gene3D" id="2.30.29.30">
    <property type="entry name" value="Pleckstrin-homology domain (PH domain)/Phosphotyrosine-binding domain (PTB)"/>
    <property type="match status" value="1"/>
</dbReference>
<dbReference type="Gene3D" id="1.10.555.10">
    <property type="entry name" value="Rho GTPase activation protein"/>
    <property type="match status" value="1"/>
</dbReference>
<dbReference type="InterPro" id="IPR036047">
    <property type="entry name" value="F-box-like_dom_sf"/>
</dbReference>
<dbReference type="InterPro" id="IPR001810">
    <property type="entry name" value="F-box_dom"/>
</dbReference>
<dbReference type="InterPro" id="IPR011993">
    <property type="entry name" value="PH-like_dom_sf"/>
</dbReference>
<dbReference type="InterPro" id="IPR001849">
    <property type="entry name" value="PH_domain"/>
</dbReference>
<dbReference type="InterPro" id="IPR050729">
    <property type="entry name" value="Rho-GAP"/>
</dbReference>
<dbReference type="InterPro" id="IPR008936">
    <property type="entry name" value="Rho_GTPase_activation_prot"/>
</dbReference>
<dbReference type="InterPro" id="IPR000198">
    <property type="entry name" value="RhoGAP_dom"/>
</dbReference>
<dbReference type="PANTHER" id="PTHR23176:SF5">
    <property type="entry name" value="RHO GTPASE-ACTIVATING PROTEIN GACFF"/>
    <property type="match status" value="1"/>
</dbReference>
<dbReference type="PANTHER" id="PTHR23176">
    <property type="entry name" value="RHO/RAC/CDC GTPASE-ACTIVATING PROTEIN"/>
    <property type="match status" value="1"/>
</dbReference>
<dbReference type="Pfam" id="PF12937">
    <property type="entry name" value="F-box-like"/>
    <property type="match status" value="1"/>
</dbReference>
<dbReference type="Pfam" id="PF00169">
    <property type="entry name" value="PH"/>
    <property type="match status" value="1"/>
</dbReference>
<dbReference type="Pfam" id="PF00620">
    <property type="entry name" value="RhoGAP"/>
    <property type="match status" value="1"/>
</dbReference>
<dbReference type="SMART" id="SM00256">
    <property type="entry name" value="FBOX"/>
    <property type="match status" value="1"/>
</dbReference>
<dbReference type="SMART" id="SM00233">
    <property type="entry name" value="PH"/>
    <property type="match status" value="2"/>
</dbReference>
<dbReference type="SMART" id="SM00324">
    <property type="entry name" value="RhoGAP"/>
    <property type="match status" value="1"/>
</dbReference>
<dbReference type="SUPFAM" id="SSF81383">
    <property type="entry name" value="F-box domain"/>
    <property type="match status" value="1"/>
</dbReference>
<dbReference type="SUPFAM" id="SSF48350">
    <property type="entry name" value="GTPase activation domain, GAP"/>
    <property type="match status" value="1"/>
</dbReference>
<dbReference type="SUPFAM" id="SSF50729">
    <property type="entry name" value="PH domain-like"/>
    <property type="match status" value="2"/>
</dbReference>
<dbReference type="PROSITE" id="PS50181">
    <property type="entry name" value="FBOX"/>
    <property type="match status" value="1"/>
</dbReference>
<dbReference type="PROSITE" id="PS50003">
    <property type="entry name" value="PH_DOMAIN"/>
    <property type="match status" value="1"/>
</dbReference>
<dbReference type="PROSITE" id="PS50238">
    <property type="entry name" value="RHOGAP"/>
    <property type="match status" value="1"/>
</dbReference>
<protein>
    <recommendedName>
        <fullName>Rho GTPase-activating protein gacFF</fullName>
    </recommendedName>
    <alternativeName>
        <fullName>GTPase activating factor for raC protein FF</fullName>
    </alternativeName>
</protein>
<feature type="chain" id="PRO_0000380200" description="Rho GTPase-activating protein gacFF">
    <location>
        <begin position="1"/>
        <end position="885"/>
    </location>
</feature>
<feature type="domain" description="F-box" evidence="3">
    <location>
        <begin position="348"/>
        <end position="394"/>
    </location>
</feature>
<feature type="domain" description="PH" evidence="4">
    <location>
        <begin position="464"/>
        <end position="571"/>
    </location>
</feature>
<feature type="domain" description="Rho-GAP" evidence="5">
    <location>
        <begin position="701"/>
        <end position="885"/>
    </location>
</feature>
<feature type="region of interest" description="Disordered" evidence="6">
    <location>
        <begin position="168"/>
        <end position="187"/>
    </location>
</feature>
<feature type="region of interest" description="Disordered" evidence="6">
    <location>
        <begin position="594"/>
        <end position="680"/>
    </location>
</feature>
<feature type="coiled-coil region" evidence="2">
    <location>
        <begin position="222"/>
        <end position="249"/>
    </location>
</feature>
<feature type="compositionally biased region" description="Low complexity" evidence="6">
    <location>
        <begin position="168"/>
        <end position="182"/>
    </location>
</feature>
<feature type="compositionally biased region" description="Low complexity" evidence="6">
    <location>
        <begin position="594"/>
        <end position="622"/>
    </location>
</feature>
<feature type="compositionally biased region" description="Low complexity" evidence="6">
    <location>
        <begin position="629"/>
        <end position="648"/>
    </location>
</feature>
<feature type="site" description="Arginine finger; crucial for GTP hydrolysis by stabilizing the transition state" evidence="5">
    <location>
        <position position="744"/>
    </location>
</feature>
<keyword id="KW-0175">Coiled coil</keyword>
<keyword id="KW-0963">Cytoplasm</keyword>
<keyword id="KW-0343">GTPase activation</keyword>
<keyword id="KW-1185">Reference proteome</keyword>
<organism>
    <name type="scientific">Dictyostelium discoideum</name>
    <name type="common">Social amoeba</name>
    <dbReference type="NCBI Taxonomy" id="44689"/>
    <lineage>
        <taxon>Eukaryota</taxon>
        <taxon>Amoebozoa</taxon>
        <taxon>Evosea</taxon>
        <taxon>Eumycetozoa</taxon>
        <taxon>Dictyostelia</taxon>
        <taxon>Dictyosteliales</taxon>
        <taxon>Dictyosteliaceae</taxon>
        <taxon>Dictyostelium</taxon>
    </lineage>
</organism>
<gene>
    <name type="primary">gacFF</name>
    <name type="ORF">DDB_G0275085</name>
</gene>
<evidence type="ECO:0000250" key="1"/>
<evidence type="ECO:0000255" key="2"/>
<evidence type="ECO:0000255" key="3">
    <source>
        <dbReference type="PROSITE-ProRule" id="PRU00080"/>
    </source>
</evidence>
<evidence type="ECO:0000255" key="4">
    <source>
        <dbReference type="PROSITE-ProRule" id="PRU00145"/>
    </source>
</evidence>
<evidence type="ECO:0000255" key="5">
    <source>
        <dbReference type="PROSITE-ProRule" id="PRU00172"/>
    </source>
</evidence>
<evidence type="ECO:0000256" key="6">
    <source>
        <dbReference type="SAM" id="MobiDB-lite"/>
    </source>
</evidence>
<evidence type="ECO:0000269" key="7">
    <source>
    </source>
</evidence>
<reference key="1">
    <citation type="journal article" date="2002" name="Nature">
        <title>Sequence and analysis of chromosome 2 of Dictyostelium discoideum.</title>
        <authorList>
            <person name="Gloeckner G."/>
            <person name="Eichinger L."/>
            <person name="Szafranski K."/>
            <person name="Pachebat J.A."/>
            <person name="Bankier A.T."/>
            <person name="Dear P.H."/>
            <person name="Lehmann R."/>
            <person name="Baumgart C."/>
            <person name="Parra G."/>
            <person name="Abril J.F."/>
            <person name="Guigo R."/>
            <person name="Kumpf K."/>
            <person name="Tunggal B."/>
            <person name="Cox E.C."/>
            <person name="Quail M.A."/>
            <person name="Platzer M."/>
            <person name="Rosenthal A."/>
            <person name="Noegel A.A."/>
        </authorList>
    </citation>
    <scope>NUCLEOTIDE SEQUENCE [LARGE SCALE GENOMIC DNA]</scope>
    <source>
        <strain>AX4</strain>
    </source>
</reference>
<reference key="2">
    <citation type="journal article" date="2005" name="Nature">
        <title>The genome of the social amoeba Dictyostelium discoideum.</title>
        <authorList>
            <person name="Eichinger L."/>
            <person name="Pachebat J.A."/>
            <person name="Gloeckner G."/>
            <person name="Rajandream M.A."/>
            <person name="Sucgang R."/>
            <person name="Berriman M."/>
            <person name="Song J."/>
            <person name="Olsen R."/>
            <person name="Szafranski K."/>
            <person name="Xu Q."/>
            <person name="Tunggal B."/>
            <person name="Kummerfeld S."/>
            <person name="Madera M."/>
            <person name="Konfortov B.A."/>
            <person name="Rivero F."/>
            <person name="Bankier A.T."/>
            <person name="Lehmann R."/>
            <person name="Hamlin N."/>
            <person name="Davies R."/>
            <person name="Gaudet P."/>
            <person name="Fey P."/>
            <person name="Pilcher K."/>
            <person name="Chen G."/>
            <person name="Saunders D."/>
            <person name="Sodergren E.J."/>
            <person name="Davis P."/>
            <person name="Kerhornou A."/>
            <person name="Nie X."/>
            <person name="Hall N."/>
            <person name="Anjard C."/>
            <person name="Hemphill L."/>
            <person name="Bason N."/>
            <person name="Farbrother P."/>
            <person name="Desany B."/>
            <person name="Just E."/>
            <person name="Morio T."/>
            <person name="Rost R."/>
            <person name="Churcher C.M."/>
            <person name="Cooper J."/>
            <person name="Haydock S."/>
            <person name="van Driessche N."/>
            <person name="Cronin A."/>
            <person name="Goodhead I."/>
            <person name="Muzny D.M."/>
            <person name="Mourier T."/>
            <person name="Pain A."/>
            <person name="Lu M."/>
            <person name="Harper D."/>
            <person name="Lindsay R."/>
            <person name="Hauser H."/>
            <person name="James K.D."/>
            <person name="Quiles M."/>
            <person name="Madan Babu M."/>
            <person name="Saito T."/>
            <person name="Buchrieser C."/>
            <person name="Wardroper A."/>
            <person name="Felder M."/>
            <person name="Thangavelu M."/>
            <person name="Johnson D."/>
            <person name="Knights A."/>
            <person name="Loulseged H."/>
            <person name="Mungall K.L."/>
            <person name="Oliver K."/>
            <person name="Price C."/>
            <person name="Quail M.A."/>
            <person name="Urushihara H."/>
            <person name="Hernandez J."/>
            <person name="Rabbinowitsch E."/>
            <person name="Steffen D."/>
            <person name="Sanders M."/>
            <person name="Ma J."/>
            <person name="Kohara Y."/>
            <person name="Sharp S."/>
            <person name="Simmonds M.N."/>
            <person name="Spiegler S."/>
            <person name="Tivey A."/>
            <person name="Sugano S."/>
            <person name="White B."/>
            <person name="Walker D."/>
            <person name="Woodward J.R."/>
            <person name="Winckler T."/>
            <person name="Tanaka Y."/>
            <person name="Shaulsky G."/>
            <person name="Schleicher M."/>
            <person name="Weinstock G.M."/>
            <person name="Rosenthal A."/>
            <person name="Cox E.C."/>
            <person name="Chisholm R.L."/>
            <person name="Gibbs R.A."/>
            <person name="Loomis W.F."/>
            <person name="Platzer M."/>
            <person name="Kay R.R."/>
            <person name="Williams J.G."/>
            <person name="Dear P.H."/>
            <person name="Noegel A.A."/>
            <person name="Barrell B.G."/>
            <person name="Kuspa A."/>
        </authorList>
    </citation>
    <scope>NUCLEOTIDE SEQUENCE [LARGE SCALE GENOMIC DNA]</scope>
    <source>
        <strain>AX4</strain>
    </source>
</reference>
<reference key="3">
    <citation type="journal article" date="2008" name="BMC Microbiol.">
        <title>Dictyostelium transcriptional responses to Pseudomonas aeruginosa: common and specific effects from PAO1 and PA14 strains.</title>
        <authorList>
            <person name="Carilla-Latorre S."/>
            <person name="Calvo-Garrido J."/>
            <person name="Bloomfield G."/>
            <person name="Skelton J."/>
            <person name="Kay R.R."/>
            <person name="Ivens A."/>
            <person name="Martinez J.L."/>
            <person name="Escalante R."/>
        </authorList>
    </citation>
    <scope>INDUCTION [LARGE SCALE ANALYSIS]</scope>
</reference>
<sequence>MNGSPYSSSSWVKSSLSTNSLGSLSNSYAAGSAGGSGNRSTVRGDSNKDQKLLGYLQKQSKSQLPNSNVKIFKKKWFWFESDSGTLFYSATSTGALSTPLTPSSLSENIKSIKITSQTTIEQSISFRLELIIKDKVPNDEFTVLNWVNTLNQWKKLNCNLDFTNDTTTTTNNSNNSNSNNNNKQYNSIENPDYLGKFGEVEGLLNAMSVSTSLNTMKTVKPLINKIQNDSEQLKLVLSQVEQQIEFLKSCQLELISHLSNDNNNNNNNNNNNNNILQILQQQQPISSKRTVSNDNLVGSNNSNNQLSLSIGLPINLNTSNTTTTTITNNTIEGENDDDEEEDEINQTSDIFSLLPTHLTLYVFSYLEPKELLILAQVSSQWQKLAGDNLLWVRFVTHFITPASIFDKSHNWKSVYLANTVTSLGYCSNYYYLKNQQKGGICTNKEKYMNRAISMYGVTPLTSLSSSKEGWLYKRGDDLLRIWKKRYFVLRDSSLFYFKHQNDNFPCGVILLNHGTKLKRASASTRKNCFKILQSKNSTITMVHKKRMPYYLSTDKEDDCNDWMILLNSIIKSNTQHQNNYGVITISGTSNNNNNNVYINNNNNNNNNNNNNNNNNNNNNNNNGSQSYNLPPLLSKSPSFSNALTSSTGISGGGGGSTKSRKSHKKSFSSGGGGSGGNNNFEQMQQQIQSVHLTPIYPMFGVALSKILENQSLITTQTHLKIPFILYICLNYIISKGIKEEGIFRVSGSLREVQELQEHFEQGREIDLDQHDIHAICGLVKTFFRKLPHTLVAADLDEYSTSVQLAASQTEDEKIQEFKFIFESISENSFHIFELLLYCLRLIVRNESFNKMTIENLLIVIMPTLKCSPVLITNGIKYYDEIFIKK</sequence>
<comment type="function">
    <text evidence="1">Rho GTPase-activating protein involved in the signal transduction pathway.</text>
</comment>
<comment type="subcellular location">
    <subcellularLocation>
        <location evidence="1">Cytoplasm</location>
    </subcellularLocation>
</comment>
<comment type="induction">
    <text evidence="7">Up-regulated by Pseudomonas aeruginosa, PAO1 strain and PA14 strain infection.</text>
</comment>
<accession>Q86I31</accession>
<accession>Q554B1</accession>